<keyword id="KW-0002">3D-structure</keyword>
<keyword id="KW-0007">Acetylation</keyword>
<keyword id="KW-0009">Actin-binding</keyword>
<keyword id="KW-0025">Alternative splicing</keyword>
<keyword id="KW-0067">ATP-binding</keyword>
<keyword id="KW-0112">Calmodulin-binding</keyword>
<keyword id="KW-0130">Cell adhesion</keyword>
<keyword id="KW-1003">Cell membrane</keyword>
<keyword id="KW-0966">Cell projection</keyword>
<keyword id="KW-0133">Cell shape</keyword>
<keyword id="KW-0175">Coiled coil</keyword>
<keyword id="KW-0225">Disease variant</keyword>
<keyword id="KW-1183">Host cell receptor for virus entry</keyword>
<keyword id="KW-0472">Membrane</keyword>
<keyword id="KW-0488">Methylation</keyword>
<keyword id="KW-0505">Motor protein</keyword>
<keyword id="KW-0518">Myosin</keyword>
<keyword id="KW-0547">Nucleotide-binding</keyword>
<keyword id="KW-0597">Phosphoprotein</keyword>
<keyword id="KW-1267">Proteomics identification</keyword>
<keyword id="KW-0675">Receptor</keyword>
<keyword id="KW-1185">Reference proteome</keyword>
<accession>P35580</accession>
<accession>B2RWP9</accession>
<accession>D3DTS1</accession>
<accession>F8VTL3</accession>
<accession>Q12989</accession>
<accession>Q149N3</accession>
<accession>Q149N4</accession>
<accession>Q16087</accession>
<accession>Q4LE45</accession>
<accession>Q6PK16</accession>
<accession>Q9BWG0</accession>
<reference key="1">
    <citation type="journal article" date="1995" name="J. Muscle Res. Cell Motil.">
        <title>Cloning of the cDNA encoding human nonmuscle myosin heavy chain-B and analysis of human tissues with isoform-specific antibodies.</title>
        <authorList>
            <person name="Phillips C.L."/>
            <person name="Yamakawa K."/>
            <person name="Adelstein R.S."/>
        </authorList>
    </citation>
    <scope>NUCLEOTIDE SEQUENCE [MRNA] (ISOFORM 1)</scope>
</reference>
<reference key="2">
    <citation type="journal article" date="1996" name="J. Immunol.">
        <title>Leukophysin: an RNA helicase A-related molecule identified in cytotoxic T cell granules and vesicles.</title>
        <authorList>
            <person name="Abdelhaleem M.M."/>
            <person name="Hameed S."/>
            <person name="Klassen D."/>
            <person name="Greenberg A.H."/>
        </authorList>
    </citation>
    <scope>NUCLEOTIDE SEQUENCE [MRNA] (ISOFORM 1)</scope>
</reference>
<reference key="3">
    <citation type="submission" date="2005-03" db="EMBL/GenBank/DDBJ databases">
        <title>Preparation of a set of expression-ready clones of mammalian long cDNAs encoding large proteins by the ORF trap cloning method.</title>
        <authorList>
            <person name="Nakajima D."/>
            <person name="Saito K."/>
            <person name="Yamakawa H."/>
            <person name="Kikuno R.F."/>
            <person name="Nakayama M."/>
            <person name="Ohara R."/>
            <person name="Okazaki N."/>
            <person name="Koga H."/>
            <person name="Nagase T."/>
            <person name="Ohara O."/>
        </authorList>
    </citation>
    <scope>NUCLEOTIDE SEQUENCE [LARGE SCALE MRNA] (ISOFORM 4)</scope>
    <source>
        <tissue>Brain</tissue>
    </source>
</reference>
<reference key="4">
    <citation type="journal article" date="2006" name="Nature">
        <title>DNA sequence of human chromosome 17 and analysis of rearrangement in the human lineage.</title>
        <authorList>
            <person name="Zody M.C."/>
            <person name="Garber M."/>
            <person name="Adams D.J."/>
            <person name="Sharpe T."/>
            <person name="Harrow J."/>
            <person name="Lupski J.R."/>
            <person name="Nicholson C."/>
            <person name="Searle S.M."/>
            <person name="Wilming L."/>
            <person name="Young S.K."/>
            <person name="Abouelleil A."/>
            <person name="Allen N.R."/>
            <person name="Bi W."/>
            <person name="Bloom T."/>
            <person name="Borowsky M.L."/>
            <person name="Bugalter B.E."/>
            <person name="Butler J."/>
            <person name="Chang J.L."/>
            <person name="Chen C.-K."/>
            <person name="Cook A."/>
            <person name="Corum B."/>
            <person name="Cuomo C.A."/>
            <person name="de Jong P.J."/>
            <person name="DeCaprio D."/>
            <person name="Dewar K."/>
            <person name="FitzGerald M."/>
            <person name="Gilbert J."/>
            <person name="Gibson R."/>
            <person name="Gnerre S."/>
            <person name="Goldstein S."/>
            <person name="Grafham D.V."/>
            <person name="Grocock R."/>
            <person name="Hafez N."/>
            <person name="Hagopian D.S."/>
            <person name="Hart E."/>
            <person name="Norman C.H."/>
            <person name="Humphray S."/>
            <person name="Jaffe D.B."/>
            <person name="Jones M."/>
            <person name="Kamal M."/>
            <person name="Khodiyar V.K."/>
            <person name="LaButti K."/>
            <person name="Laird G."/>
            <person name="Lehoczky J."/>
            <person name="Liu X."/>
            <person name="Lokyitsang T."/>
            <person name="Loveland J."/>
            <person name="Lui A."/>
            <person name="Macdonald P."/>
            <person name="Major J.E."/>
            <person name="Matthews L."/>
            <person name="Mauceli E."/>
            <person name="McCarroll S.A."/>
            <person name="Mihalev A.H."/>
            <person name="Mudge J."/>
            <person name="Nguyen C."/>
            <person name="Nicol R."/>
            <person name="O'Leary S.B."/>
            <person name="Osoegawa K."/>
            <person name="Schwartz D.C."/>
            <person name="Shaw-Smith C."/>
            <person name="Stankiewicz P."/>
            <person name="Steward C."/>
            <person name="Swarbreck D."/>
            <person name="Venkataraman V."/>
            <person name="Whittaker C.A."/>
            <person name="Yang X."/>
            <person name="Zimmer A.R."/>
            <person name="Bradley A."/>
            <person name="Hubbard T."/>
            <person name="Birren B.W."/>
            <person name="Rogers J."/>
            <person name="Lander E.S."/>
            <person name="Nusbaum C."/>
        </authorList>
    </citation>
    <scope>NUCLEOTIDE SEQUENCE [LARGE SCALE GENOMIC DNA]</scope>
</reference>
<reference key="5">
    <citation type="submission" date="2005-09" db="EMBL/GenBank/DDBJ databases">
        <authorList>
            <person name="Mural R.J."/>
            <person name="Istrail S."/>
            <person name="Sutton G.G."/>
            <person name="Florea L."/>
            <person name="Halpern A.L."/>
            <person name="Mobarry C.M."/>
            <person name="Lippert R."/>
            <person name="Walenz B."/>
            <person name="Shatkay H."/>
            <person name="Dew I."/>
            <person name="Miller J.R."/>
            <person name="Flanigan M.J."/>
            <person name="Edwards N.J."/>
            <person name="Bolanos R."/>
            <person name="Fasulo D."/>
            <person name="Halldorsson B.V."/>
            <person name="Hannenhalli S."/>
            <person name="Turner R."/>
            <person name="Yooseph S."/>
            <person name="Lu F."/>
            <person name="Nusskern D.R."/>
            <person name="Shue B.C."/>
            <person name="Zheng X.H."/>
            <person name="Zhong F."/>
            <person name="Delcher A.L."/>
            <person name="Huson D.H."/>
            <person name="Kravitz S.A."/>
            <person name="Mouchard L."/>
            <person name="Reinert K."/>
            <person name="Remington K.A."/>
            <person name="Clark A.G."/>
            <person name="Waterman M.S."/>
            <person name="Eichler E.E."/>
            <person name="Adams M.D."/>
            <person name="Hunkapiller M.W."/>
            <person name="Myers E.W."/>
            <person name="Venter J.C."/>
        </authorList>
    </citation>
    <scope>NUCLEOTIDE SEQUENCE [LARGE SCALE GENOMIC DNA]</scope>
</reference>
<reference key="6">
    <citation type="journal article" date="2004" name="Genome Res.">
        <title>The status, quality, and expansion of the NIH full-length cDNA project: the Mammalian Gene Collection (MGC).</title>
        <authorList>
            <consortium name="The MGC Project Team"/>
        </authorList>
    </citation>
    <scope>NUCLEOTIDE SEQUENCE [LARGE SCALE MRNA] (ISOFORMS 1 AND 5)</scope>
    <source>
        <tissue>Eye</tissue>
        <tissue>Muscle</tissue>
    </source>
</reference>
<reference key="7">
    <citation type="journal article" date="1991" name="Circ. Res.">
        <title>Human nonmuscle myosin heavy chains are encoded by two genes located on different chromosomes.</title>
        <authorList>
            <person name="Simons M."/>
            <person name="Wang M."/>
            <person name="McBride O.W."/>
            <person name="Kawamoto S."/>
            <person name="Yamakawa K."/>
            <person name="Gdula D."/>
            <person name="Adelstein R.S."/>
            <person name="Weir L."/>
        </authorList>
    </citation>
    <scope>NUCLEOTIDE SEQUENCE [MRNA] OF 63-722 (ISOFORM 1)</scope>
</reference>
<reference key="8">
    <citation type="journal article" date="1995" name="J. Biol. Chem.">
        <title>Neuronal cell expression of inserted isoforms of vertebrate nonmuscle myosin heavy chain II-B.</title>
        <authorList>
            <person name="Itoh K."/>
            <person name="Adelstein R.S."/>
        </authorList>
    </citation>
    <scope>NUCLEOTIDE SEQUENCE [MRNA] OF 211-301 (ISOFORM 2)</scope>
    <scope>ALTERNATIVE SPLICING (ISOFORM 3)</scope>
    <scope>TISSUE SPECIFICITY</scope>
</reference>
<reference key="9">
    <citation type="journal article" date="1993" name="Circ. Res.">
        <title>Human smooth muscle myosin heavy chain isoforms as molecular markers for vascular development and atherosclerosis.</title>
        <authorList>
            <person name="Aikawa M."/>
            <person name="Sivam P.N."/>
            <person name="Kuro-O M."/>
            <person name="Kimura K."/>
            <person name="Nakahara K."/>
            <person name="Takewaki S."/>
            <person name="Ueda M."/>
            <person name="Yamaguchi H."/>
            <person name="Yazaki Y."/>
            <person name="Periasamy M."/>
        </authorList>
    </citation>
    <scope>NUCLEOTIDE SEQUENCE [MRNA] OF 1751-1976</scope>
</reference>
<reference key="10">
    <citation type="journal article" date="2003" name="Nature">
        <title>Proteomic characterization of the human centrosome by protein correlation profiling.</title>
        <authorList>
            <person name="Andersen J.S."/>
            <person name="Wilkinson C.J."/>
            <person name="Mayor T."/>
            <person name="Mortensen P."/>
            <person name="Nigg E.A."/>
            <person name="Mann M."/>
        </authorList>
    </citation>
    <scope>IDENTIFICATION BY MASS SPECTROMETRY</scope>
    <source>
        <tissue>Lymphoblast</tissue>
    </source>
</reference>
<reference key="11">
    <citation type="journal article" date="2006" name="Cell">
        <title>Global, in vivo, and site-specific phosphorylation dynamics in signaling networks.</title>
        <authorList>
            <person name="Olsen J.V."/>
            <person name="Blagoev B."/>
            <person name="Gnad F."/>
            <person name="Macek B."/>
            <person name="Kumar C."/>
            <person name="Mortensen P."/>
            <person name="Mann M."/>
        </authorList>
    </citation>
    <scope>IDENTIFICATION BY MASS SPECTROMETRY [LARGE SCALE ANALYSIS]</scope>
    <source>
        <tissue>Cervix carcinoma</tissue>
    </source>
</reference>
<reference key="12">
    <citation type="journal article" date="2006" name="Cell Cycle">
        <title>A novel guanine nucleotide exchange factor MyoGEF is required for cytokinesis.</title>
        <authorList>
            <person name="Wu D."/>
            <person name="Asiedu M."/>
            <person name="Adelstein R.S."/>
            <person name="Wei Q."/>
        </authorList>
    </citation>
    <scope>INTERACTION WITH PLEKHG6</scope>
</reference>
<reference key="13">
    <citation type="journal article" date="2007" name="Science">
        <title>ATM and ATR substrate analysis reveals extensive protein networks responsive to DNA damage.</title>
        <authorList>
            <person name="Matsuoka S."/>
            <person name="Ballif B.A."/>
            <person name="Smogorzewska A."/>
            <person name="McDonald E.R. III"/>
            <person name="Hurov K.E."/>
            <person name="Luo J."/>
            <person name="Bakalarski C.E."/>
            <person name="Zhao Z."/>
            <person name="Solimini N."/>
            <person name="Lerenthal Y."/>
            <person name="Shiloh Y."/>
            <person name="Gygi S.P."/>
            <person name="Elledge S.J."/>
        </authorList>
    </citation>
    <scope>IDENTIFICATION BY MASS SPECTROMETRY [LARGE SCALE ANALYSIS]</scope>
    <source>
        <tissue>Embryonic kidney</tissue>
    </source>
</reference>
<reference key="14">
    <citation type="journal article" date="2008" name="Proc. Natl. Acad. Sci. U.S.A.">
        <title>A quantitative atlas of mitotic phosphorylation.</title>
        <authorList>
            <person name="Dephoure N."/>
            <person name="Zhou C."/>
            <person name="Villen J."/>
            <person name="Beausoleil S.A."/>
            <person name="Bakalarski C.E."/>
            <person name="Elledge S.J."/>
            <person name="Gygi S.P."/>
        </authorList>
    </citation>
    <scope>PHOSPHORYLATION [LARGE SCALE ANALYSIS] AT SER-1939; SER-1952 AND SER-1956</scope>
    <scope>IDENTIFICATION BY MASS SPECTROMETRY [LARGE SCALE ANALYSIS]</scope>
    <source>
        <tissue>Cervix carcinoma</tissue>
    </source>
</reference>
<reference key="15">
    <citation type="journal article" date="2008" name="Proteomics">
        <title>Large-scale phosphoproteome analysis of human liver tissue by enrichment and fractionation of phosphopeptides with strong anion exchange chromatography.</title>
        <authorList>
            <person name="Han G."/>
            <person name="Ye M."/>
            <person name="Zhou H."/>
            <person name="Jiang X."/>
            <person name="Feng S."/>
            <person name="Jiang X."/>
            <person name="Tian R."/>
            <person name="Wan D."/>
            <person name="Zou H."/>
            <person name="Gu J."/>
        </authorList>
    </citation>
    <scope>PHOSPHORYLATION [LARGE SCALE ANALYSIS] AT SER-1956</scope>
    <scope>IDENTIFICATION BY MASS SPECTROMETRY [LARGE SCALE ANALYSIS]</scope>
    <source>
        <tissue>Liver</tissue>
    </source>
</reference>
<reference key="16">
    <citation type="journal article" date="2009" name="Anal. Chem.">
        <title>Lys-N and trypsin cover complementary parts of the phosphoproteome in a refined SCX-based approach.</title>
        <authorList>
            <person name="Gauci S."/>
            <person name="Helbig A.O."/>
            <person name="Slijper M."/>
            <person name="Krijgsveld J."/>
            <person name="Heck A.J."/>
            <person name="Mohammed S."/>
        </authorList>
    </citation>
    <scope>IDENTIFICATION BY MASS SPECTROMETRY [LARGE SCALE ANALYSIS]</scope>
</reference>
<reference key="17">
    <citation type="journal article" date="2009" name="Sci. Signal.">
        <title>Quantitative phosphoproteomic analysis of T cell receptor signaling reveals system-wide modulation of protein-protein interactions.</title>
        <authorList>
            <person name="Mayya V."/>
            <person name="Lundgren D.H."/>
            <person name="Hwang S.-I."/>
            <person name="Rezaul K."/>
            <person name="Wu L."/>
            <person name="Eng J.K."/>
            <person name="Rodionov V."/>
            <person name="Han D.K."/>
        </authorList>
    </citation>
    <scope>PHOSPHORYLATION [LARGE SCALE ANALYSIS] AT SER-1939 AND SER-1956</scope>
    <scope>IDENTIFICATION BY MASS SPECTROMETRY [LARGE SCALE ANALYSIS]</scope>
    <source>
        <tissue>Leukemic T-cell</tissue>
    </source>
</reference>
<reference key="18">
    <citation type="journal article" date="2009" name="Science">
        <title>Lysine acetylation targets protein complexes and co-regulates major cellular functions.</title>
        <authorList>
            <person name="Choudhary C."/>
            <person name="Kumar C."/>
            <person name="Gnad F."/>
            <person name="Nielsen M.L."/>
            <person name="Rehman M."/>
            <person name="Walther T.C."/>
            <person name="Olsen J.V."/>
            <person name="Mann M."/>
        </authorList>
    </citation>
    <scope>ACETYLATION [LARGE SCALE ANALYSIS] AT LYS-442 AND LYS-1645</scope>
    <scope>IDENTIFICATION BY MASS SPECTROMETRY [LARGE SCALE ANALYSIS]</scope>
</reference>
<reference key="19">
    <citation type="journal article" date="2010" name="J. Biol. Chem.">
        <title>A protein interaction network for Ecm29 links the 26 S proteasome to molecular motors and endosomal components.</title>
        <authorList>
            <person name="Gorbea C."/>
            <person name="Pratt G."/>
            <person name="Ustrell V."/>
            <person name="Bell R."/>
            <person name="Sahasrabudhe S."/>
            <person name="Hughes R.E."/>
            <person name="Rechsteiner M."/>
        </authorList>
    </citation>
    <scope>INTERACTION WITH ECPAS</scope>
</reference>
<reference key="20">
    <citation type="journal article" date="2010" name="J. Mol. Biol.">
        <title>Nonmuscle myosin-dependent synthesis of type I collagen.</title>
        <authorList>
            <person name="Cai L."/>
            <person name="Fritz D."/>
            <person name="Stefanovic L."/>
            <person name="Stefanovic B."/>
        </authorList>
    </citation>
    <scope>FUNCTION</scope>
    <scope>INTERACTION WITH LARP6</scope>
</reference>
<reference key="21">
    <citation type="journal article" date="2010" name="PLoS ONE">
        <title>Myosin II motor proteins with different functions determine the fate of lamellipodia extension during cell spreading.</title>
        <authorList>
            <person name="Betapudi V."/>
        </authorList>
    </citation>
    <scope>FUNCTION</scope>
    <scope>SUBCELLULAR LOCATION</scope>
</reference>
<reference key="22">
    <citation type="journal article" date="2010" name="Sci. Signal.">
        <title>Quantitative phosphoproteomics reveals widespread full phosphorylation site occupancy during mitosis.</title>
        <authorList>
            <person name="Olsen J.V."/>
            <person name="Vermeulen M."/>
            <person name="Santamaria A."/>
            <person name="Kumar C."/>
            <person name="Miller M.L."/>
            <person name="Jensen L.J."/>
            <person name="Gnad F."/>
            <person name="Cox J."/>
            <person name="Jensen T.S."/>
            <person name="Nigg E.A."/>
            <person name="Brunak S."/>
            <person name="Mann M."/>
        </authorList>
    </citation>
    <scope>PHOSPHORYLATION [LARGE SCALE ANALYSIS] AT SER-1956</scope>
    <scope>PHOSPHORYLATION [LARGE SCALE ANALYSIS] AT SER-214 (ISOFORMS 2 AND 4)</scope>
    <scope>IDENTIFICATION BY MASS SPECTROMETRY [LARGE SCALE ANALYSIS]</scope>
    <source>
        <tissue>Cervix carcinoma</tissue>
    </source>
</reference>
<reference key="23">
    <citation type="journal article" date="2011" name="BMC Syst. Biol.">
        <title>Initial characterization of the human central proteome.</title>
        <authorList>
            <person name="Burkard T.R."/>
            <person name="Planyavsky M."/>
            <person name="Kaupe I."/>
            <person name="Breitwieser F.P."/>
            <person name="Buerckstuemmer T."/>
            <person name="Bennett K.L."/>
            <person name="Superti-Furga G."/>
            <person name="Colinge J."/>
        </authorList>
    </citation>
    <scope>IDENTIFICATION BY MASS SPECTROMETRY [LARGE SCALE ANALYSIS]</scope>
</reference>
<reference key="24">
    <citation type="journal article" date="2011" name="Sci. Signal.">
        <title>System-wide temporal characterization of the proteome and phosphoproteome of human embryonic stem cell differentiation.</title>
        <authorList>
            <person name="Rigbolt K.T."/>
            <person name="Prokhorova T.A."/>
            <person name="Akimov V."/>
            <person name="Henningsen J."/>
            <person name="Johansen P.T."/>
            <person name="Kratchmarova I."/>
            <person name="Kassem M."/>
            <person name="Mann M."/>
            <person name="Olsen J.V."/>
            <person name="Blagoev B."/>
        </authorList>
    </citation>
    <scope>PHOSPHORYLATION [LARGE SCALE ANALYSIS] AT SER-1145 AND SER-1938</scope>
    <scope>PHOSPHORYLATION [LARGE SCALE ANALYSIS] AT SER-214 (ISOFORMS 2 AND 4)</scope>
    <scope>IDENTIFICATION BY MASS SPECTROMETRY [LARGE SCALE ANALYSIS]</scope>
</reference>
<reference key="25">
    <citation type="journal article" date="2012" name="Biochim. Biophys. Acta">
        <title>The PDZ-binding motif of MCC is phosphorylated at position -1 and controls lamellipodia formation in colon epithelial cells.</title>
        <authorList>
            <person name="Pangon L."/>
            <person name="Van Kralingen C."/>
            <person name="Abas M."/>
            <person name="Daly R.J."/>
            <person name="Musgrove E.A."/>
            <person name="Kohonen-Corish M.R."/>
        </authorList>
    </citation>
    <scope>INTERACTION WITH MCC</scope>
    <scope>SUBCELLULAR LOCATION</scope>
</reference>
<reference key="26">
    <citation type="journal article" date="2013" name="J. Proteome Res.">
        <title>Toward a comprehensive characterization of a human cancer cell phosphoproteome.</title>
        <authorList>
            <person name="Zhou H."/>
            <person name="Di Palma S."/>
            <person name="Preisinger C."/>
            <person name="Peng M."/>
            <person name="Polat A.N."/>
            <person name="Heck A.J."/>
            <person name="Mohammed S."/>
        </authorList>
    </citation>
    <scope>PHOSPHORYLATION [LARGE SCALE ANALYSIS] AT SER-1935; SER-1937; SER-1952 AND SER-1956</scope>
    <scope>IDENTIFICATION BY MASS SPECTROMETRY [LARGE SCALE ANALYSIS]</scope>
    <source>
        <tissue>Cervix carcinoma</tissue>
        <tissue>Erythroleukemia</tissue>
    </source>
</reference>
<reference key="27">
    <citation type="journal article" date="2014" name="J. Proteomics">
        <title>An enzyme assisted RP-RPLC approach for in-depth analysis of human liver phosphoproteome.</title>
        <authorList>
            <person name="Bian Y."/>
            <person name="Song C."/>
            <person name="Cheng K."/>
            <person name="Dong M."/>
            <person name="Wang F."/>
            <person name="Huang J."/>
            <person name="Sun D."/>
            <person name="Wang L."/>
            <person name="Ye M."/>
            <person name="Zou H."/>
        </authorList>
    </citation>
    <scope>PHOSPHORYLATION [LARGE SCALE ANALYSIS] AT SER-1935; SER-1939; SER-1952; SER-1956 AND THR-1960</scope>
    <scope>PHOSPHORYLATION [LARGE SCALE ANALYSIS] AT SER-214 (ISOFORMS 2 AND 4)</scope>
    <scope>IDENTIFICATION BY MASS SPECTROMETRY [LARGE SCALE ANALYSIS]</scope>
    <source>
        <tissue>Liver</tissue>
    </source>
</reference>
<reference key="28">
    <citation type="journal article" date="2015" name="J. Virol.">
        <title>Nonmuscle myosin heavy chain IIb mediates herpes simplex virus 1 entry.</title>
        <authorList>
            <person name="Arii J."/>
            <person name="Hirohata Y."/>
            <person name="Kato A."/>
            <person name="Kawaguchi Y."/>
        </authorList>
    </citation>
    <scope>FUNCTION (MICROBIAL INFECTION)</scope>
    <scope>INTERACTION WITH HERPES SIMPLEX VIRUS GLYCOPROTEIN B</scope>
    <scope>SUBCELLULAR LOCATION (MICROBIAL INFECTION)</scope>
</reference>
<reference key="29">
    <citation type="journal article" date="2017" name="Sci. Rep.">
        <title>C9ORF135 encodes a membrane protein whose expression is related to pluripotency in human embryonic stem cells.</title>
        <authorList>
            <person name="Zhou S."/>
            <person name="Liu Y."/>
            <person name="Ma Y."/>
            <person name="Zhang X."/>
            <person name="Li Y."/>
            <person name="Wen J."/>
        </authorList>
    </citation>
    <scope>INTERACTION WITH CFAP95</scope>
</reference>
<reference key="30">
    <citation type="journal article" date="2024" name="Nature">
        <title>TMEFF1 is a neuron-specific restriction factor for herpes simplex virus.</title>
        <authorList>
            <person name="Dai Y."/>
            <person name="Idorn M."/>
            <person name="Serrero M.C."/>
            <person name="Pan X."/>
            <person name="Thomsen E.A."/>
            <person name="Narita R."/>
            <person name="Maimaitili M."/>
            <person name="Qian X."/>
            <person name="Iversen M.B."/>
            <person name="Reinert L.S."/>
            <person name="Flygaard R.K."/>
            <person name="Chen M."/>
            <person name="Ding X."/>
            <person name="Zhang B.C."/>
            <person name="Carter-Timofte M.E."/>
            <person name="Lu Q."/>
            <person name="Jiang Z."/>
            <person name="Zhong Y."/>
            <person name="Zhang S."/>
            <person name="Da L."/>
            <person name="Zhu J."/>
            <person name="Denham M."/>
            <person name="Nissen P."/>
            <person name="Mogensen T.H."/>
            <person name="Mikkelsen J.G."/>
            <person name="Zhang S.Y."/>
            <person name="Casanova J.L."/>
            <person name="Cai Y."/>
            <person name="Paludan S.R."/>
        </authorList>
    </citation>
    <scope>FUNCTION (MICROBIAL INFECTION)</scope>
</reference>
<reference key="31">
    <citation type="journal article" date="2013" name="Rare Dis.">
        <title>A human de novo mutation in MYH10 phenocopies the loss of function mutation in mice.</title>
        <authorList>
            <person name="Tuzovic L."/>
            <person name="Yu L."/>
            <person name="Zeng W."/>
            <person name="Li X."/>
            <person name="Lu H."/>
            <person name="Lu H.M."/>
            <person name="Gonzalez K.D."/>
            <person name="Chung W.K."/>
        </authorList>
    </citation>
    <scope>VARIANT 908-GLU--GLU-1976 DEL</scope>
</reference>
<reference key="32">
    <citation type="journal article" date="2014" name="PLoS Genet.">
        <title>De novo mutations in moderate or severe intellectual disability.</title>
        <authorList>
            <person name="Hamdan F.F."/>
            <person name="Srour M."/>
            <person name="Capo-Chichi J.M."/>
            <person name="Daoud H."/>
            <person name="Nassif C."/>
            <person name="Patry L."/>
            <person name="Massicotte C."/>
            <person name="Ambalavanan A."/>
            <person name="Spiegelman D."/>
            <person name="Diallo O."/>
            <person name="Henrion E."/>
            <person name="Dionne-Laporte A."/>
            <person name="Fougerat A."/>
            <person name="Pshezhetsky A.V."/>
            <person name="Venkateswaran S."/>
            <person name="Rouleau G.A."/>
            <person name="Michaud J.L."/>
        </authorList>
    </citation>
    <scope>VARIANT CYS-270</scope>
</reference>
<feature type="chain" id="PRO_0000123421" description="Myosin-10">
    <location>
        <begin position="1"/>
        <end position="1976"/>
    </location>
</feature>
<feature type="domain" description="Myosin N-terminal SH3-like" evidence="7">
    <location>
        <begin position="31"/>
        <end position="81"/>
    </location>
</feature>
<feature type="domain" description="Myosin motor" evidence="6">
    <location>
        <begin position="85"/>
        <end position="783"/>
    </location>
</feature>
<feature type="domain" description="IQ" evidence="5">
    <location>
        <begin position="786"/>
        <end position="815"/>
    </location>
</feature>
<feature type="region of interest" description="Actin-binding" evidence="6">
    <location>
        <begin position="661"/>
        <end position="683"/>
    </location>
</feature>
<feature type="region of interest" description="Disordered" evidence="8">
    <location>
        <begin position="1127"/>
        <end position="1147"/>
    </location>
</feature>
<feature type="region of interest" description="Disordered" evidence="8">
    <location>
        <begin position="1697"/>
        <end position="1728"/>
    </location>
</feature>
<feature type="region of interest" description="Disordered" evidence="8">
    <location>
        <begin position="1872"/>
        <end position="1976"/>
    </location>
</feature>
<feature type="coiled-coil region" evidence="4">
    <location>
        <begin position="845"/>
        <end position="1976"/>
    </location>
</feature>
<feature type="compositionally biased region" description="Basic and acidic residues" evidence="8">
    <location>
        <begin position="1129"/>
        <end position="1147"/>
    </location>
</feature>
<feature type="compositionally biased region" description="Basic and acidic residues" evidence="8">
    <location>
        <begin position="1698"/>
        <end position="1708"/>
    </location>
</feature>
<feature type="compositionally biased region" description="Polar residues" evidence="8">
    <location>
        <begin position="1967"/>
        <end position="1976"/>
    </location>
</feature>
<feature type="binding site" evidence="4">
    <location>
        <begin position="178"/>
        <end position="185"/>
    </location>
    <ligand>
        <name>ATP</name>
        <dbReference type="ChEBI" id="CHEBI:30616"/>
    </ligand>
</feature>
<feature type="modified residue" description="Omega-N-methylarginine" evidence="2">
    <location>
        <position position="18"/>
    </location>
</feature>
<feature type="modified residue" description="N6-acetyllysine" evidence="27">
    <location>
        <position position="442"/>
    </location>
</feature>
<feature type="modified residue" description="Phosphoserine" evidence="30">
    <location>
        <position position="1145"/>
    </location>
</feature>
<feature type="modified residue" description="N6-acetyllysine" evidence="2">
    <location>
        <position position="1241"/>
    </location>
</feature>
<feature type="modified residue" description="N6-acetyllysine" evidence="2">
    <location>
        <position position="1301"/>
    </location>
</feature>
<feature type="modified residue" description="N6-acetyllysine" evidence="27">
    <location>
        <position position="1645"/>
    </location>
</feature>
<feature type="modified residue" description="Omega-N-methylarginine" evidence="2">
    <location>
        <position position="1930"/>
    </location>
</feature>
<feature type="modified residue" description="Phosphoserine" evidence="31 32">
    <location>
        <position position="1935"/>
    </location>
</feature>
<feature type="modified residue" description="Phosphoserine" evidence="31">
    <location>
        <position position="1937"/>
    </location>
</feature>
<feature type="modified residue" description="Phosphoserine" evidence="30">
    <location>
        <position position="1938"/>
    </location>
</feature>
<feature type="modified residue" description="Phosphoserine" evidence="26 28 32">
    <location>
        <position position="1939"/>
    </location>
</feature>
<feature type="modified residue" description="Omega-N-methylarginine" evidence="2">
    <location>
        <position position="1940"/>
    </location>
</feature>
<feature type="modified residue" description="Phosphoserine" evidence="26 31 32">
    <location>
        <position position="1952"/>
    </location>
</feature>
<feature type="modified residue" description="Phosphoserine" evidence="25 26 28 29 31 32">
    <location>
        <position position="1956"/>
    </location>
</feature>
<feature type="modified residue" description="Phosphothreonine" evidence="32">
    <location>
        <position position="1960"/>
    </location>
</feature>
<feature type="modified residue" description="Phosphoserine" evidence="3">
    <location>
        <position position="1975"/>
    </location>
</feature>
<feature type="splice variant" id="VSP_022013" description="In isoform 2." evidence="20">
    <original>P</original>
    <variation>PQESPKPVKHQSGSLLY</variation>
    <location>
        <position position="211"/>
    </location>
</feature>
<feature type="splice variant" id="VSP_046033" description="In isoform 4." evidence="21">
    <original>P</original>
    <variation>PQESPKPVKHQ</variation>
    <location>
        <position position="211"/>
    </location>
</feature>
<feature type="splice variant" id="VSP_054974" description="In isoform 5." evidence="18">
    <original>P</original>
    <variation>PESPKPVKHQ</variation>
    <location>
        <position position="211"/>
    </location>
</feature>
<feature type="splice variant" id="VSP_022014" description="In isoform 3 and isoform 4." evidence="21">
    <original>D</original>
    <variation>DEIQNIQRASFYDSVSGLHEPP</variation>
    <location>
        <position position="621"/>
    </location>
</feature>
<feature type="sequence variant" id="VAR_078649" description="Found in a patient with severe intellectual disease, microcephaly and feeding difficulties as well as cerebral atrophy; likely pathogenic; dbSNP:rs727504231." evidence="15">
    <original>R</original>
    <variation>C</variation>
    <location>
        <position position="270"/>
    </location>
</feature>
<feature type="sequence variant" id="VAR_078650" description="Found in a patient with intrauterine growth restriction, microcephaly, developmental delay, failure to thrive, congenital bilateral hip dysplasia, cerebral and cerebellar atrophy, hydrocephalus and congenital diaphragmatic hernia; likely pathogenic." evidence="14">
    <location>
        <begin position="908"/>
        <end position="1976"/>
    </location>
</feature>
<feature type="sequence conflict" description="In Ref. 1; AAA99177." evidence="22" ref="1">
    <original>Y</original>
    <variation>C</variation>
    <location>
        <position position="800"/>
    </location>
</feature>
<feature type="sequence conflict" description="In Ref. 5; AAH08968." evidence="22" ref="5">
    <original>NE</original>
    <variation>KK</variation>
    <location>
        <begin position="943"/>
        <end position="944"/>
    </location>
</feature>
<feature type="sequence conflict" description="In Ref. 5; AAI17691." evidence="22" ref="5">
    <original>L</original>
    <variation>P</variation>
    <location>
        <position position="1429"/>
    </location>
</feature>
<feature type="sequence conflict" description="In Ref. 9; AAB28952." evidence="22" ref="9">
    <original>N</original>
    <variation>D</variation>
    <location>
        <position position="1751"/>
    </location>
</feature>
<feature type="turn" evidence="33">
    <location>
        <begin position="9"/>
        <end position="14"/>
    </location>
</feature>
<feature type="strand" evidence="33">
    <location>
        <begin position="36"/>
        <end position="39"/>
    </location>
</feature>
<feature type="strand" evidence="33">
    <location>
        <begin position="41"/>
        <end position="49"/>
    </location>
</feature>
<feature type="strand" evidence="33">
    <location>
        <begin position="57"/>
        <end position="65"/>
    </location>
</feature>
<feature type="strand" evidence="33">
    <location>
        <begin position="68"/>
        <end position="75"/>
    </location>
</feature>
<feature type="helix" evidence="33">
    <location>
        <begin position="82"/>
        <end position="84"/>
    </location>
</feature>
<feature type="helix" evidence="33">
    <location>
        <begin position="90"/>
        <end position="92"/>
    </location>
</feature>
<feature type="helix" evidence="33">
    <location>
        <begin position="98"/>
        <end position="109"/>
    </location>
</feature>
<feature type="turn" evidence="33">
    <location>
        <begin position="110"/>
        <end position="112"/>
    </location>
</feature>
<feature type="strand" evidence="33">
    <location>
        <begin position="115"/>
        <end position="118"/>
    </location>
</feature>
<feature type="strand" evidence="33">
    <location>
        <begin position="121"/>
        <end position="125"/>
    </location>
</feature>
<feature type="helix" evidence="33">
    <location>
        <begin position="136"/>
        <end position="141"/>
    </location>
</feature>
<feature type="helix" evidence="33">
    <location>
        <begin position="154"/>
        <end position="167"/>
    </location>
</feature>
<feature type="strand" evidence="33">
    <location>
        <begin position="172"/>
        <end position="178"/>
    </location>
</feature>
<feature type="helix" evidence="33">
    <location>
        <begin position="180"/>
        <end position="182"/>
    </location>
</feature>
<feature type="helix" evidence="33">
    <location>
        <begin position="184"/>
        <end position="198"/>
    </location>
</feature>
<feature type="helix" evidence="33">
    <location>
        <begin position="216"/>
        <end position="218"/>
    </location>
</feature>
<feature type="helix" evidence="33">
    <location>
        <begin position="221"/>
        <end position="229"/>
    </location>
</feature>
<feature type="strand" evidence="33">
    <location>
        <begin position="237"/>
        <end position="240"/>
    </location>
</feature>
<feature type="strand" evidence="33">
    <location>
        <begin position="242"/>
        <end position="250"/>
    </location>
</feature>
<feature type="strand" evidence="33">
    <location>
        <begin position="256"/>
        <end position="264"/>
    </location>
</feature>
<feature type="helix" evidence="33">
    <location>
        <begin position="269"/>
        <end position="272"/>
    </location>
</feature>
<feature type="helix" evidence="33">
    <location>
        <begin position="282"/>
        <end position="290"/>
    </location>
</feature>
<feature type="helix" evidence="33">
    <location>
        <begin position="293"/>
        <end position="298"/>
    </location>
</feature>
<feature type="helix" evidence="33">
    <location>
        <begin position="304"/>
        <end position="306"/>
    </location>
</feature>
<feature type="helix" evidence="33">
    <location>
        <begin position="322"/>
        <end position="335"/>
    </location>
</feature>
<feature type="helix" evidence="33">
    <location>
        <begin position="340"/>
        <end position="357"/>
    </location>
</feature>
<feature type="helix" evidence="33">
    <location>
        <begin position="379"/>
        <end position="384"/>
    </location>
</feature>
<feature type="helix" evidence="33">
    <location>
        <begin position="389"/>
        <end position="397"/>
    </location>
</feature>
<feature type="helix" evidence="33">
    <location>
        <begin position="414"/>
        <end position="442"/>
    </location>
</feature>
<feature type="strand" evidence="33">
    <location>
        <begin position="453"/>
        <end position="461"/>
    </location>
</feature>
<feature type="helix" evidence="33">
    <location>
        <begin position="471"/>
        <end position="501"/>
    </location>
</feature>
<feature type="helix" evidence="33">
    <location>
        <begin position="511"/>
        <end position="514"/>
    </location>
</feature>
<feature type="helix" evidence="33">
    <location>
        <begin position="516"/>
        <end position="522"/>
    </location>
</feature>
<feature type="helix" evidence="33">
    <location>
        <begin position="531"/>
        <end position="538"/>
    </location>
</feature>
<feature type="helix" evidence="33">
    <location>
        <begin position="546"/>
        <end position="556"/>
    </location>
</feature>
<feature type="strand" evidence="33">
    <location>
        <begin position="567"/>
        <end position="569"/>
    </location>
</feature>
<feature type="strand" evidence="33">
    <location>
        <begin position="572"/>
        <end position="578"/>
    </location>
</feature>
<feature type="strand" evidence="33">
    <location>
        <begin position="583"/>
        <end position="586"/>
    </location>
</feature>
<feature type="helix" evidence="33">
    <location>
        <begin position="591"/>
        <end position="594"/>
    </location>
</feature>
<feature type="helix" evidence="33">
    <location>
        <begin position="601"/>
        <end position="608"/>
    </location>
</feature>
<feature type="helix" evidence="33">
    <location>
        <begin position="613"/>
        <end position="618"/>
    </location>
</feature>
<feature type="helix" evidence="33">
    <location>
        <begin position="653"/>
        <end position="668"/>
    </location>
</feature>
<feature type="strand" evidence="33">
    <location>
        <begin position="671"/>
        <end position="679"/>
    </location>
</feature>
<feature type="helix" evidence="33">
    <location>
        <begin position="692"/>
        <end position="702"/>
    </location>
</feature>
<feature type="helix" evidence="33">
    <location>
        <begin position="704"/>
        <end position="711"/>
    </location>
</feature>
<feature type="strand" evidence="33">
    <location>
        <begin position="717"/>
        <end position="720"/>
    </location>
</feature>
<feature type="helix" evidence="33">
    <location>
        <begin position="721"/>
        <end position="728"/>
    </location>
</feature>
<feature type="helix" evidence="33">
    <location>
        <begin position="729"/>
        <end position="731"/>
    </location>
</feature>
<feature type="turn" evidence="33">
    <location>
        <begin position="733"/>
        <end position="735"/>
    </location>
</feature>
<feature type="helix" evidence="33">
    <location>
        <begin position="745"/>
        <end position="754"/>
    </location>
</feature>
<feature type="strand" evidence="33">
    <location>
        <begin position="760"/>
        <end position="763"/>
    </location>
</feature>
<feature type="strand" evidence="33">
    <location>
        <begin position="765"/>
        <end position="770"/>
    </location>
</feature>
<feature type="helix" evidence="33">
    <location>
        <begin position="774"/>
        <end position="782"/>
    </location>
</feature>
<feature type="modified residue" description="Phosphoserine" evidence="29 30 32">
    <location sequence="P35580-2">
        <position position="214"/>
    </location>
</feature>
<feature type="modified residue" description="Phosphoserine" evidence="29 30 32">
    <location sequence="P35580-4">
        <position position="214"/>
    </location>
</feature>
<evidence type="ECO:0000250" key="1"/>
<evidence type="ECO:0000250" key="2">
    <source>
        <dbReference type="UniProtKB" id="Q61879"/>
    </source>
</evidence>
<evidence type="ECO:0000250" key="3">
    <source>
        <dbReference type="UniProtKB" id="Q9JLT0"/>
    </source>
</evidence>
<evidence type="ECO:0000255" key="4"/>
<evidence type="ECO:0000255" key="5">
    <source>
        <dbReference type="PROSITE-ProRule" id="PRU00116"/>
    </source>
</evidence>
<evidence type="ECO:0000255" key="6">
    <source>
        <dbReference type="PROSITE-ProRule" id="PRU00782"/>
    </source>
</evidence>
<evidence type="ECO:0000255" key="7">
    <source>
        <dbReference type="PROSITE-ProRule" id="PRU01190"/>
    </source>
</evidence>
<evidence type="ECO:0000256" key="8">
    <source>
        <dbReference type="SAM" id="MobiDB-lite"/>
    </source>
</evidence>
<evidence type="ECO:0000269" key="9">
    <source>
    </source>
</evidence>
<evidence type="ECO:0000269" key="10">
    <source>
    </source>
</evidence>
<evidence type="ECO:0000269" key="11">
    <source>
    </source>
</evidence>
<evidence type="ECO:0000269" key="12">
    <source>
    </source>
</evidence>
<evidence type="ECO:0000269" key="13">
    <source>
    </source>
</evidence>
<evidence type="ECO:0000269" key="14">
    <source>
    </source>
</evidence>
<evidence type="ECO:0000269" key="15">
    <source>
    </source>
</evidence>
<evidence type="ECO:0000269" key="16">
    <source>
    </source>
</evidence>
<evidence type="ECO:0000269" key="17">
    <source>
    </source>
</evidence>
<evidence type="ECO:0000303" key="18">
    <source>
    </source>
</evidence>
<evidence type="ECO:0000303" key="19">
    <source>
    </source>
</evidence>
<evidence type="ECO:0000303" key="20">
    <source>
    </source>
</evidence>
<evidence type="ECO:0000303" key="21">
    <source ref="3"/>
</evidence>
<evidence type="ECO:0000305" key="22"/>
<evidence type="ECO:0000305" key="23">
    <source>
    </source>
</evidence>
<evidence type="ECO:0000305" key="24">
    <source>
    </source>
</evidence>
<evidence type="ECO:0007744" key="25">
    <source>
    </source>
</evidence>
<evidence type="ECO:0007744" key="26">
    <source>
    </source>
</evidence>
<evidence type="ECO:0007744" key="27">
    <source>
    </source>
</evidence>
<evidence type="ECO:0007744" key="28">
    <source>
    </source>
</evidence>
<evidence type="ECO:0007744" key="29">
    <source>
    </source>
</evidence>
<evidence type="ECO:0007744" key="30">
    <source>
    </source>
</evidence>
<evidence type="ECO:0007744" key="31">
    <source>
    </source>
</evidence>
<evidence type="ECO:0007744" key="32">
    <source>
    </source>
</evidence>
<evidence type="ECO:0007829" key="33">
    <source>
        <dbReference type="PDB" id="4PD3"/>
    </source>
</evidence>
<sequence>MAQRTGLEDPERYLFVDRAVIYNPATQADWTAKKLVWIPSERHGFEAASIKEERGDEVMVELAENGKKAMVNKDDIQKMNPPKFSKVEDMAELTCLNEASVLHNLKDRYYSGLIYTYSGLFCVVINPYKNLPIYSENIIEMYRGKKRHEMPPHIYAISESAYRCMLQDREDQSILCTGESGAGKTENTKKVIQYLAHVASSHKGRKDHNIPGELERQLLQANPILESFGNAKTVKNDNSSRFGKFIRINFDVTGYIVGANIETYLLEKSRAVRQAKDERTFHIFYQLLSGAGEHLKSDLLLEGFNNYRFLSNGYIPIPGQQDKDNFQETMEAMHIMGFSHEEILSMLKVVSSVLQFGNISFKKERNTDQASMPENTVAQKLCHLLGMNVMEFTRAILTPRIKVGRDYVQKAQTKEQADFAVEALAKATYERLFRWLVHRINKALDRTKRQGASFIGILDIAGFEIFELNSFEQLCINYTNEKLQQLFNHTMFILEQEEYQREGIEWNFIDFGLDLQPCIDLIERPANPPGVLALLDEECWFPKATDKTFVEKLVQEQGSHSKFQKPRQLKDKADFCIIHYAGKVDYKADEWLMKNMDPLNDNVATLLHQSSDRFVAELWKDVDRIVGLDQVTGMTETAFGSAYKTKKGMFRTVGQLYKESLTKLMATLRNTNPNFVRCIIPNHEKRAGKLDPHLVLDQLRCNGVLEGIRICRQGFPNRIVFQEFRQRYEILTPNAIPKGFMDGKQACERMIRALELDPNLYRIGQSKIFFRAGVLAHLEEERDLKITDIIIFFQAVCRGYLARKAFAKKQQQLSALKVLQRNCAAYLKLRHWQWWRVFTKVKPLLQVTRQEEELQAKDEELLKVKEKQTKVEGELEEMERKHQQLLEEKNILAEQLQAETELFAEAEEMRARLAAKKQELEEILHDLESRVEEEEERNQILQNEKKKMQAHIQDLEEQLDEEEGARQKLQLEKVTAEAKIKKMEEEILLLEDQNSKFIKEKKLMEDRIAECSSQLAEEEEKAKNLAKIRNKQEVMISDLEERLKKEEKTRQELEKAKRKLDGETTDLQDQIAELQAQIDELKLQLAKKEEELQGALARGDDETLHKNNALKVVRELQAQIAELQEDFESEKASRNKAEKQKRDLSEELEALKTELEDTLDTTAAQQELRTKREQEVAELKKALEEETKNHEAQIQDMRQRHATALEELSEQLEQAKRFKANLEKNKQGLETDNKELACEVKVLQQVKAESEHKRKKLDAQVQELHAKVSEGDRLRVELAEKASKLQNELDNVSTLLEEAEKKGIKFAKDAASLESQLQDTQELLQEETRQKLNLSSRIRQLEEEKNSLQEQQEEEEEARKNLEKQVLALQSQLADTKKKVDDDLGTIESLEEAKKKLLKDAEALSQRLEEKALAYDKLEKTKNRLQQELDDLTVDLDHQRQVASNLEKKQKKFDQLLAEEKSISARYAEERDRAEAEAREKETKALSLARALEEALEAKEEFERQNKQLRADMEDLMSSKDDVGKNVHELEKSKRALEQQVEEMRTQLEELEDELQATEDAKLRLEVNMQAMKAQFERDLQTRDEQNEEKKRLLIKQVRELEAELEDERKQRALAVASKKKMEIDLKDLEAQIEAANKARDEVIKQLRKLQAQMKDYQRELEEARASRDEIFAQSKESEKKLKSLEAEILQLQEELASSERARRHAEQERDELADEITNSASGKSALLDEKRRLEARIAQLEEELEEEQSNMELLNDRFRKTTLQVDTLNAELAAERSAAQKSDNARQQLERQNKELKAKLQELEGAVKSKFKATISALEAKIGQLEEQLEQEAKERAAANKLVRRTEKKLKEIFMQVEDERRHADQYKEQMEKANARMKQLKRQLEEAEEEATRANASRRKLQRELDDATEANEGLSREVSTLKNRLRRGGPISFSSSRSGRRQLHLEGASLELSDDDTESKTSDVNETQPPQSE</sequence>
<name>MYH10_HUMAN</name>
<gene>
    <name type="primary">MYH10</name>
</gene>
<proteinExistence type="evidence at protein level"/>
<comment type="function">
    <text evidence="10 11">Cellular myosin that appears to play a role in cytokinesis, cell shape, and specialized functions such as secretion and capping. Involved with LARP6 in the stabilization of type I collagen mRNAs for CO1A1 and CO1A2. During cell spreading, plays an important role in cytoskeleton reorganization, focal contacts formation (in the central part but not the margins of spreading cells), and lamellipodial extension; this function is mechanically antagonized by MYH9.</text>
</comment>
<comment type="function">
    <text evidence="23 24">(Microbial infection) Acts as a receptor for herpes simplex virus 1/HHV-1 envelope glycoprotein B.</text>
</comment>
<comment type="subunit">
    <text evidence="2 9 11 12 13 16">Myosin is a hexameric protein that consists of 2 heavy chain subunits (MHC), 2 alkali light chain subunits (MLC) and 2 regulatory light chain subunits (MLC-2). Interacts with PLEKHG6 (PubMed:16721066). Interacts with ECPAS (PubMed:20682791). Interacts with KIF26B (By similarity). Interacts with LARP6 (PubMed:20603131). Interacts with MCC (PubMed:22480440). Interacts with CFAP95 (PubMed:28345668).</text>
</comment>
<comment type="subunit">
    <text evidence="23">(Microbial infection) Interacts with herpes simplex virus 1/HHV-1 envelope glycoprotein B.</text>
</comment>
<comment type="subcellular location">
    <subcellularLocation>
        <location evidence="10 13">Cell projection</location>
        <location evidence="10 13">Lamellipodium</location>
    </subcellularLocation>
    <text>Colocalizes with MCC at the leading edge of migrating cells.</text>
</comment>
<comment type="subcellular location">
    <subcellularLocation>
        <location evidence="23">Cell membrane</location>
    </subcellularLocation>
    <text evidence="23">(Microbial infection) Localizes at the surface of the cell membrane following infection by herpes simplex virus 1/HHV-1,.</text>
</comment>
<comment type="alternative products">
    <event type="alternative splicing"/>
    <isoform>
        <id>P35580-1</id>
        <name>1</name>
        <sequence type="displayed"/>
    </isoform>
    <isoform>
        <id>P35580-2</id>
        <name>2</name>
        <sequence type="described" ref="VSP_022013"/>
    </isoform>
    <isoform>
        <id>P35580-3</id>
        <name>3</name>
        <sequence type="described" ref="VSP_022014"/>
    </isoform>
    <isoform>
        <id>P35580-4</id>
        <name>4</name>
        <sequence type="described" ref="VSP_046033 VSP_022014"/>
    </isoform>
    <isoform>
        <id>P35580-5</id>
        <name>5</name>
        <sequence type="described" ref="VSP_054974"/>
    </isoform>
</comment>
<comment type="tissue specificity">
    <text evidence="17">Isoform 1 is expressed in cerebellum and spinal chord. Isoform 2 is expressed in cerebrum and retina. Isoform 3 is expressed in the cerebrum and to a much lower extent in cerebellum.</text>
</comment>
<comment type="domain">
    <text>The rodlike tail sequence is highly repetitive, showing cycles of a 28-residue repeat pattern composed of 4 heptapeptides, characteristic for alpha-helical coiled coils.</text>
</comment>
<comment type="PTM">
    <text evidence="1">Phosphorylated by ABL2.</text>
</comment>
<comment type="disease">
    <text evidence="14 15">Associated with severe intellectual disability, microcephaly, and feeding difficulties as well as cerebral atrophy.</text>
</comment>
<comment type="similarity">
    <text evidence="22">Belongs to the TRAFAC class myosin-kinesin ATPase superfamily. Myosin family.</text>
</comment>
<comment type="caution">
    <text evidence="22">Represents a conventional non-muscle myosin. This protein should not be confused with the unconventional myosin-10 (MYO10).</text>
</comment>
<comment type="sequence caution" evidence="22">
    <conflict type="erroneous initiation">
        <sequence resource="EMBL-CDS" id="BAE06108"/>
    </conflict>
    <text>Extended N-terminus.</text>
</comment>
<protein>
    <recommendedName>
        <fullName>Myosin-10</fullName>
    </recommendedName>
    <alternativeName>
        <fullName>Cellular myosin heavy chain, type B</fullName>
    </alternativeName>
    <alternativeName>
        <fullName>Myosin heavy chain 10</fullName>
    </alternativeName>
    <alternativeName>
        <fullName>Myosin heavy chain, non-muscle IIb</fullName>
    </alternativeName>
    <alternativeName>
        <fullName>Non-muscle myosin heavy chain B</fullName>
        <shortName>NMMHC-B</shortName>
    </alternativeName>
    <alternativeName>
        <fullName evidence="19">Non-muscle myosin heavy chain IIb</fullName>
        <shortName evidence="19">NMMHC II-b</shortName>
        <shortName evidence="19">NMMHC-IIB</shortName>
    </alternativeName>
</protein>
<organism>
    <name type="scientific">Homo sapiens</name>
    <name type="common">Human</name>
    <dbReference type="NCBI Taxonomy" id="9606"/>
    <lineage>
        <taxon>Eukaryota</taxon>
        <taxon>Metazoa</taxon>
        <taxon>Chordata</taxon>
        <taxon>Craniata</taxon>
        <taxon>Vertebrata</taxon>
        <taxon>Euteleostomi</taxon>
        <taxon>Mammalia</taxon>
        <taxon>Eutheria</taxon>
        <taxon>Euarchontoglires</taxon>
        <taxon>Primates</taxon>
        <taxon>Haplorrhini</taxon>
        <taxon>Catarrhini</taxon>
        <taxon>Hominidae</taxon>
        <taxon>Homo</taxon>
    </lineage>
</organism>
<dbReference type="EMBL" id="M69181">
    <property type="protein sequence ID" value="AAA99177.1"/>
    <property type="molecule type" value="mRNA"/>
</dbReference>
<dbReference type="EMBL" id="AB210026">
    <property type="protein sequence ID" value="BAE06108.1"/>
    <property type="status" value="ALT_INIT"/>
    <property type="molecule type" value="mRNA"/>
</dbReference>
<dbReference type="EMBL" id="AC011061">
    <property type="status" value="NOT_ANNOTATED_CDS"/>
    <property type="molecule type" value="Genomic_DNA"/>
</dbReference>
<dbReference type="EMBL" id="AC025518">
    <property type="status" value="NOT_ANNOTATED_CDS"/>
    <property type="molecule type" value="Genomic_DNA"/>
</dbReference>
<dbReference type="EMBL" id="AC026130">
    <property type="status" value="NOT_ANNOTATED_CDS"/>
    <property type="molecule type" value="Genomic_DNA"/>
</dbReference>
<dbReference type="EMBL" id="CH471108">
    <property type="protein sequence ID" value="EAW90046.1"/>
    <property type="molecule type" value="Genomic_DNA"/>
</dbReference>
<dbReference type="EMBL" id="CH471108">
    <property type="protein sequence ID" value="EAW90047.1"/>
    <property type="molecule type" value="Genomic_DNA"/>
</dbReference>
<dbReference type="EMBL" id="CH471108">
    <property type="protein sequence ID" value="EAW90048.1"/>
    <property type="molecule type" value="Genomic_DNA"/>
</dbReference>
<dbReference type="EMBL" id="CH471108">
    <property type="protein sequence ID" value="EAW90049.1"/>
    <property type="molecule type" value="Genomic_DNA"/>
</dbReference>
<dbReference type="EMBL" id="BC000280">
    <property type="protein sequence ID" value="AAH00280.1"/>
    <property type="molecule type" value="mRNA"/>
</dbReference>
<dbReference type="EMBL" id="BC008968">
    <property type="protein sequence ID" value="AAH08968.1"/>
    <property type="molecule type" value="mRNA"/>
</dbReference>
<dbReference type="EMBL" id="BC117690">
    <property type="protein sequence ID" value="AAI17691.1"/>
    <property type="molecule type" value="mRNA"/>
</dbReference>
<dbReference type="EMBL" id="BC117691">
    <property type="protein sequence ID" value="AAI17692.1"/>
    <property type="molecule type" value="mRNA"/>
</dbReference>
<dbReference type="EMBL" id="BC144668">
    <property type="protein sequence ID" value="AAI44669.1"/>
    <property type="molecule type" value="mRNA"/>
</dbReference>
<dbReference type="EMBL" id="BC150634">
    <property type="protein sequence ID" value="AAI50635.1"/>
    <property type="molecule type" value="mRNA"/>
</dbReference>
<dbReference type="EMBL" id="U15618">
    <property type="protein sequence ID" value="AAA87712.1"/>
    <property type="molecule type" value="mRNA"/>
</dbReference>
<dbReference type="EMBL" id="S67247">
    <property type="protein sequence ID" value="AAB28952.1"/>
    <property type="molecule type" value="mRNA"/>
</dbReference>
<dbReference type="CCDS" id="CCDS11144.1">
    <molecule id="P35580-1"/>
</dbReference>
<dbReference type="CCDS" id="CCDS58515.1">
    <molecule id="P35580-4"/>
</dbReference>
<dbReference type="CCDS" id="CCDS73984.1">
    <molecule id="P35580-5"/>
</dbReference>
<dbReference type="PIR" id="A59252">
    <property type="entry name" value="A59252"/>
</dbReference>
<dbReference type="PIR" id="I65769">
    <property type="entry name" value="I65769"/>
</dbReference>
<dbReference type="RefSeq" id="NP_001242941.1">
    <molecule id="P35580-4"/>
    <property type="nucleotide sequence ID" value="NM_001256012.3"/>
</dbReference>
<dbReference type="RefSeq" id="NP_001243024.1">
    <molecule id="P35580-5"/>
    <property type="nucleotide sequence ID" value="NM_001256095.2"/>
</dbReference>
<dbReference type="RefSeq" id="NP_005955.3">
    <molecule id="P35580-1"/>
    <property type="nucleotide sequence ID" value="NM_005964.5"/>
</dbReference>
<dbReference type="RefSeq" id="XP_016880169.1">
    <property type="nucleotide sequence ID" value="XM_017024680.1"/>
</dbReference>
<dbReference type="RefSeq" id="XP_016880170.1">
    <property type="nucleotide sequence ID" value="XM_017024681.1"/>
</dbReference>
<dbReference type="RefSeq" id="XP_016880171.1">
    <property type="nucleotide sequence ID" value="XM_017024682.1"/>
</dbReference>
<dbReference type="PDB" id="4PD3">
    <property type="method" value="X-ray"/>
    <property type="resolution" value="2.84 A"/>
    <property type="chains" value="A/B=1-782"/>
</dbReference>
<dbReference type="PDBsum" id="4PD3"/>
<dbReference type="SMR" id="P35580"/>
<dbReference type="BioGRID" id="110713">
    <property type="interactions" value="388"/>
</dbReference>
<dbReference type="CORUM" id="P35580"/>
<dbReference type="DIP" id="DIP-31110N"/>
<dbReference type="FunCoup" id="P35580">
    <property type="interactions" value="1414"/>
</dbReference>
<dbReference type="IntAct" id="P35580">
    <property type="interactions" value="111"/>
</dbReference>
<dbReference type="MINT" id="P35580"/>
<dbReference type="STRING" id="9606.ENSP00000353590"/>
<dbReference type="BindingDB" id="P35580"/>
<dbReference type="ChEMBL" id="CHEMBL4105746"/>
<dbReference type="DrugCentral" id="P35580"/>
<dbReference type="CarbonylDB" id="P35580"/>
<dbReference type="GlyCosmos" id="P35580">
    <property type="glycosylation" value="1 site, 2 glycans"/>
</dbReference>
<dbReference type="GlyGen" id="P35580">
    <property type="glycosylation" value="2 sites, 2 O-linked glycans (2 sites)"/>
</dbReference>
<dbReference type="iPTMnet" id="P35580"/>
<dbReference type="MetOSite" id="P35580"/>
<dbReference type="PhosphoSitePlus" id="P35580"/>
<dbReference type="SwissPalm" id="P35580"/>
<dbReference type="BioMuta" id="MYH10"/>
<dbReference type="DMDM" id="215274129"/>
<dbReference type="jPOST" id="P35580"/>
<dbReference type="MassIVE" id="P35580"/>
<dbReference type="PaxDb" id="9606-ENSP00000353590"/>
<dbReference type="PeptideAtlas" id="P35580"/>
<dbReference type="PRIDE" id="P35580"/>
<dbReference type="ProteomicsDB" id="28641"/>
<dbReference type="ProteomicsDB" id="55095">
    <molecule id="P35580-1"/>
</dbReference>
<dbReference type="ProteomicsDB" id="55096">
    <molecule id="P35580-2"/>
</dbReference>
<dbReference type="ProteomicsDB" id="55097">
    <molecule id="P35580-3"/>
</dbReference>
<dbReference type="Pumba" id="P35580"/>
<dbReference type="Antibodypedia" id="24686">
    <property type="antibodies" value="162 antibodies from 31 providers"/>
</dbReference>
<dbReference type="DNASU" id="4628"/>
<dbReference type="Ensembl" id="ENST00000269243.8">
    <molecule id="P35580-1"/>
    <property type="protein sequence ID" value="ENSP00000269243.4"/>
    <property type="gene ID" value="ENSG00000133026.14"/>
</dbReference>
<dbReference type="Ensembl" id="ENST00000360416.8">
    <molecule id="P35580-4"/>
    <property type="protein sequence ID" value="ENSP00000353590.4"/>
    <property type="gene ID" value="ENSG00000133026.14"/>
</dbReference>
<dbReference type="Ensembl" id="ENST00000379980.8">
    <molecule id="P35580-5"/>
    <property type="protein sequence ID" value="ENSP00000369315.5"/>
    <property type="gene ID" value="ENSG00000133026.14"/>
</dbReference>
<dbReference type="Ensembl" id="ENST00000686654.1">
    <molecule id="P35580-4"/>
    <property type="protein sequence ID" value="ENSP00000508862.1"/>
    <property type="gene ID" value="ENSG00000133026.14"/>
</dbReference>
<dbReference type="Ensembl" id="ENST00000687178.1">
    <molecule id="P35580-5"/>
    <property type="protein sequence ID" value="ENSP00000509748.1"/>
    <property type="gene ID" value="ENSG00000133026.14"/>
</dbReference>
<dbReference type="Ensembl" id="ENST00000688902.1">
    <molecule id="P35580-4"/>
    <property type="protein sequence ID" value="ENSP00000509091.1"/>
    <property type="gene ID" value="ENSG00000133026.14"/>
</dbReference>
<dbReference type="Ensembl" id="ENST00000693441.1">
    <molecule id="P35580-4"/>
    <property type="protein sequence ID" value="ENSP00000509241.1"/>
    <property type="gene ID" value="ENSG00000133026.14"/>
</dbReference>
<dbReference type="GeneID" id="4628"/>
<dbReference type="KEGG" id="hsa:4628"/>
<dbReference type="MANE-Select" id="ENST00000360416.8">
    <molecule id="P35580-4"/>
    <property type="protein sequence ID" value="ENSP00000353590.4"/>
    <property type="RefSeq nucleotide sequence ID" value="NM_001256012.3"/>
    <property type="RefSeq protein sequence ID" value="NP_001242941.1"/>
</dbReference>
<dbReference type="UCSC" id="uc002gll.5">
    <molecule id="P35580-1"/>
    <property type="organism name" value="human"/>
</dbReference>
<dbReference type="AGR" id="HGNC:7568"/>
<dbReference type="CTD" id="4628"/>
<dbReference type="DisGeNET" id="4628"/>
<dbReference type="GeneCards" id="MYH10"/>
<dbReference type="HGNC" id="HGNC:7568">
    <property type="gene designation" value="MYH10"/>
</dbReference>
<dbReference type="HPA" id="ENSG00000133026">
    <property type="expression patterns" value="Low tissue specificity"/>
</dbReference>
<dbReference type="MalaCards" id="MYH10"/>
<dbReference type="MIM" id="160776">
    <property type="type" value="gene"/>
</dbReference>
<dbReference type="neXtProt" id="NX_P35580"/>
<dbReference type="OpenTargets" id="ENSG00000133026"/>
<dbReference type="PharmGKB" id="PA31366"/>
<dbReference type="VEuPathDB" id="HostDB:ENSG00000133026"/>
<dbReference type="eggNOG" id="KOG0160">
    <property type="taxonomic scope" value="Eukaryota"/>
</dbReference>
<dbReference type="eggNOG" id="KOG0161">
    <property type="taxonomic scope" value="Eukaryota"/>
</dbReference>
<dbReference type="GeneTree" id="ENSGT00940000155159"/>
<dbReference type="HOGENOM" id="CLU_000192_8_0_1"/>
<dbReference type="InParanoid" id="P35580"/>
<dbReference type="OMA" id="NXVRELE"/>
<dbReference type="OrthoDB" id="10254995at2759"/>
<dbReference type="PAN-GO" id="P35580">
    <property type="GO annotations" value="8 GO annotations based on evolutionary models"/>
</dbReference>
<dbReference type="PhylomeDB" id="P35580"/>
<dbReference type="TreeFam" id="TF333601"/>
<dbReference type="PathwayCommons" id="P35580"/>
<dbReference type="Reactome" id="R-HSA-3928663">
    <property type="pathway name" value="EPHA-mediated growth cone collapse"/>
</dbReference>
<dbReference type="Reactome" id="R-HSA-416572">
    <property type="pathway name" value="Sema4D induced cell migration and growth-cone collapse"/>
</dbReference>
<dbReference type="Reactome" id="R-HSA-5625740">
    <property type="pathway name" value="RHO GTPases activate PKNs"/>
</dbReference>
<dbReference type="Reactome" id="R-HSA-5625900">
    <property type="pathway name" value="RHO GTPases activate CIT"/>
</dbReference>
<dbReference type="Reactome" id="R-HSA-5627117">
    <property type="pathway name" value="RHO GTPases Activate ROCKs"/>
</dbReference>
<dbReference type="Reactome" id="R-HSA-5627123">
    <property type="pathway name" value="RHO GTPases activate PAKs"/>
</dbReference>
<dbReference type="SignaLink" id="P35580"/>
<dbReference type="SIGNOR" id="P35580"/>
<dbReference type="BioGRID-ORCS" id="4628">
    <property type="hits" value="20 hits in 1164 CRISPR screens"/>
</dbReference>
<dbReference type="CD-CODE" id="232F8A39">
    <property type="entry name" value="P-body"/>
</dbReference>
<dbReference type="CD-CODE" id="FB4E32DD">
    <property type="entry name" value="Presynaptic clusters and postsynaptic densities"/>
</dbReference>
<dbReference type="ChiTaRS" id="MYH10">
    <property type="organism name" value="human"/>
</dbReference>
<dbReference type="GeneWiki" id="MYH10"/>
<dbReference type="GenomeRNAi" id="4628"/>
<dbReference type="Pharos" id="P35580">
    <property type="development level" value="Tchem"/>
</dbReference>
<dbReference type="PRO" id="PR:P35580"/>
<dbReference type="Proteomes" id="UP000005640">
    <property type="component" value="Chromosome 17"/>
</dbReference>
<dbReference type="RNAct" id="P35580">
    <property type="molecule type" value="protein"/>
</dbReference>
<dbReference type="Bgee" id="ENSG00000133026">
    <property type="expression patterns" value="Expressed in blood vessel layer and 213 other cell types or tissues"/>
</dbReference>
<dbReference type="ExpressionAtlas" id="P35580">
    <property type="expression patterns" value="baseline and differential"/>
</dbReference>
<dbReference type="GO" id="GO:0042641">
    <property type="term" value="C:actomyosin"/>
    <property type="evidence" value="ECO:0000314"/>
    <property type="project" value="UniProtKB"/>
</dbReference>
<dbReference type="GO" id="GO:0005903">
    <property type="term" value="C:brush border"/>
    <property type="evidence" value="ECO:0007669"/>
    <property type="project" value="Ensembl"/>
</dbReference>
<dbReference type="GO" id="GO:0005938">
    <property type="term" value="C:cell cortex"/>
    <property type="evidence" value="ECO:0000314"/>
    <property type="project" value="UniProtKB"/>
</dbReference>
<dbReference type="GO" id="GO:0009986">
    <property type="term" value="C:cell surface"/>
    <property type="evidence" value="ECO:0000314"/>
    <property type="project" value="UniProt"/>
</dbReference>
<dbReference type="GO" id="GO:0032154">
    <property type="term" value="C:cleavage furrow"/>
    <property type="evidence" value="ECO:0000314"/>
    <property type="project" value="UniProtKB"/>
</dbReference>
<dbReference type="GO" id="GO:0005737">
    <property type="term" value="C:cytoplasm"/>
    <property type="evidence" value="ECO:0000314"/>
    <property type="project" value="UniProtKB"/>
</dbReference>
<dbReference type="GO" id="GO:0009898">
    <property type="term" value="C:cytoplasmic side of plasma membrane"/>
    <property type="evidence" value="ECO:0007669"/>
    <property type="project" value="Ensembl"/>
</dbReference>
<dbReference type="GO" id="GO:0005829">
    <property type="term" value="C:cytosol"/>
    <property type="evidence" value="ECO:0000315"/>
    <property type="project" value="UniProtKB"/>
</dbReference>
<dbReference type="GO" id="GO:0043197">
    <property type="term" value="C:dendritic spine"/>
    <property type="evidence" value="ECO:0007669"/>
    <property type="project" value="Ensembl"/>
</dbReference>
<dbReference type="GO" id="GO:0070062">
    <property type="term" value="C:extracellular exosome"/>
    <property type="evidence" value="ECO:0007005"/>
    <property type="project" value="UniProtKB"/>
</dbReference>
<dbReference type="GO" id="GO:0098978">
    <property type="term" value="C:glutamatergic synapse"/>
    <property type="evidence" value="ECO:0007669"/>
    <property type="project" value="Ensembl"/>
</dbReference>
<dbReference type="GO" id="GO:0030426">
    <property type="term" value="C:growth cone"/>
    <property type="evidence" value="ECO:0007669"/>
    <property type="project" value="Ensembl"/>
</dbReference>
<dbReference type="GO" id="GO:0030027">
    <property type="term" value="C:lamellipodium"/>
    <property type="evidence" value="ECO:0007669"/>
    <property type="project" value="UniProtKB-SubCell"/>
</dbReference>
<dbReference type="GO" id="GO:0030496">
    <property type="term" value="C:midbody"/>
    <property type="evidence" value="ECO:0000314"/>
    <property type="project" value="UniProtKB"/>
</dbReference>
<dbReference type="GO" id="GO:0016459">
    <property type="term" value="C:myosin complex"/>
    <property type="evidence" value="ECO:0000303"/>
    <property type="project" value="UniProtKB"/>
</dbReference>
<dbReference type="GO" id="GO:0032982">
    <property type="term" value="C:myosin filament"/>
    <property type="evidence" value="ECO:0000318"/>
    <property type="project" value="GO_Central"/>
</dbReference>
<dbReference type="GO" id="GO:0016460">
    <property type="term" value="C:myosin II complex"/>
    <property type="evidence" value="ECO:0000314"/>
    <property type="project" value="UniProtKB"/>
</dbReference>
<dbReference type="GO" id="GO:0097513">
    <property type="term" value="C:myosin II filament"/>
    <property type="evidence" value="ECO:0000314"/>
    <property type="project" value="UniProtKB"/>
</dbReference>
<dbReference type="GO" id="GO:0031594">
    <property type="term" value="C:neuromuscular junction"/>
    <property type="evidence" value="ECO:0007669"/>
    <property type="project" value="Ensembl"/>
</dbReference>
<dbReference type="GO" id="GO:0043025">
    <property type="term" value="C:neuronal cell body"/>
    <property type="evidence" value="ECO:0007669"/>
    <property type="project" value="Ensembl"/>
</dbReference>
<dbReference type="GO" id="GO:0005634">
    <property type="term" value="C:nucleus"/>
    <property type="evidence" value="ECO:0007005"/>
    <property type="project" value="UniProtKB"/>
</dbReference>
<dbReference type="GO" id="GO:0098871">
    <property type="term" value="C:postsynaptic actin cytoskeleton"/>
    <property type="evidence" value="ECO:0000314"/>
    <property type="project" value="SynGO"/>
</dbReference>
<dbReference type="GO" id="GO:0016528">
    <property type="term" value="C:sarcoplasm"/>
    <property type="evidence" value="ECO:0007669"/>
    <property type="project" value="Ensembl"/>
</dbReference>
<dbReference type="GO" id="GO:0005819">
    <property type="term" value="C:spindle"/>
    <property type="evidence" value="ECO:0007669"/>
    <property type="project" value="Ensembl"/>
</dbReference>
<dbReference type="GO" id="GO:0001725">
    <property type="term" value="C:stress fiber"/>
    <property type="evidence" value="ECO:0000314"/>
    <property type="project" value="UniProtKB"/>
</dbReference>
<dbReference type="GO" id="GO:0003779">
    <property type="term" value="F:actin binding"/>
    <property type="evidence" value="ECO:0000303"/>
    <property type="project" value="UniProtKB"/>
</dbReference>
<dbReference type="GO" id="GO:0051015">
    <property type="term" value="F:actin filament binding"/>
    <property type="evidence" value="ECO:0000314"/>
    <property type="project" value="MGI"/>
</dbReference>
<dbReference type="GO" id="GO:0043531">
    <property type="term" value="F:ADP binding"/>
    <property type="evidence" value="ECO:0000314"/>
    <property type="project" value="MGI"/>
</dbReference>
<dbReference type="GO" id="GO:0005524">
    <property type="term" value="F:ATP binding"/>
    <property type="evidence" value="ECO:0000314"/>
    <property type="project" value="MGI"/>
</dbReference>
<dbReference type="GO" id="GO:0005516">
    <property type="term" value="F:calmodulin binding"/>
    <property type="evidence" value="ECO:0007669"/>
    <property type="project" value="UniProtKB-KW"/>
</dbReference>
<dbReference type="GO" id="GO:0000146">
    <property type="term" value="F:microfilament motor activity"/>
    <property type="evidence" value="ECO:0000314"/>
    <property type="project" value="MGI"/>
</dbReference>
<dbReference type="GO" id="GO:0048027">
    <property type="term" value="F:mRNA 5'-UTR binding"/>
    <property type="evidence" value="ECO:0000314"/>
    <property type="project" value="UniProtKB"/>
</dbReference>
<dbReference type="GO" id="GO:0035613">
    <property type="term" value="F:RNA stem-loop binding"/>
    <property type="evidence" value="ECO:0000314"/>
    <property type="project" value="UniProtKB"/>
</dbReference>
<dbReference type="GO" id="GO:0001618">
    <property type="term" value="F:virus receptor activity"/>
    <property type="evidence" value="ECO:0000314"/>
    <property type="project" value="UniProtKB"/>
</dbReference>
<dbReference type="GO" id="GO:0030048">
    <property type="term" value="P:actin filament-based movement"/>
    <property type="evidence" value="ECO:0000314"/>
    <property type="project" value="MGI"/>
</dbReference>
<dbReference type="GO" id="GO:0031032">
    <property type="term" value="P:actomyosin structure organization"/>
    <property type="evidence" value="ECO:0000315"/>
    <property type="project" value="UniProtKB"/>
</dbReference>
<dbReference type="GO" id="GO:0007512">
    <property type="term" value="P:adult heart development"/>
    <property type="evidence" value="ECO:0007669"/>
    <property type="project" value="Ensembl"/>
</dbReference>
<dbReference type="GO" id="GO:0035904">
    <property type="term" value="P:aorta development"/>
    <property type="evidence" value="ECO:0007669"/>
    <property type="project" value="Ensembl"/>
</dbReference>
<dbReference type="GO" id="GO:0007411">
    <property type="term" value="P:axon guidance"/>
    <property type="evidence" value="ECO:0007669"/>
    <property type="project" value="Ensembl"/>
</dbReference>
<dbReference type="GO" id="GO:0060038">
    <property type="term" value="P:cardiac muscle cell proliferation"/>
    <property type="evidence" value="ECO:0007669"/>
    <property type="project" value="Ensembl"/>
</dbReference>
<dbReference type="GO" id="GO:0055003">
    <property type="term" value="P:cardiac myofibril assembly"/>
    <property type="evidence" value="ECO:0007669"/>
    <property type="project" value="Ensembl"/>
</dbReference>
<dbReference type="GO" id="GO:0003279">
    <property type="term" value="P:cardiac septum development"/>
    <property type="evidence" value="ECO:0007669"/>
    <property type="project" value="Ensembl"/>
</dbReference>
<dbReference type="GO" id="GO:0007155">
    <property type="term" value="P:cell adhesion"/>
    <property type="evidence" value="ECO:0007669"/>
    <property type="project" value="UniProtKB-KW"/>
</dbReference>
<dbReference type="GO" id="GO:0021680">
    <property type="term" value="P:cerebellar Purkinje cell layer development"/>
    <property type="evidence" value="ECO:0007669"/>
    <property type="project" value="Ensembl"/>
</dbReference>
<dbReference type="GO" id="GO:0060976">
    <property type="term" value="P:coronary vasculature development"/>
    <property type="evidence" value="ECO:0007669"/>
    <property type="project" value="Ensembl"/>
</dbReference>
<dbReference type="GO" id="GO:0006887">
    <property type="term" value="P:exocytosis"/>
    <property type="evidence" value="ECO:0007669"/>
    <property type="project" value="Ensembl"/>
</dbReference>
<dbReference type="GO" id="GO:0021592">
    <property type="term" value="P:fourth ventricle development"/>
    <property type="evidence" value="ECO:0007669"/>
    <property type="project" value="Ensembl"/>
</dbReference>
<dbReference type="GO" id="GO:0001701">
    <property type="term" value="P:in utero embryonic development"/>
    <property type="evidence" value="ECO:0007669"/>
    <property type="project" value="Ensembl"/>
</dbReference>
<dbReference type="GO" id="GO:0021670">
    <property type="term" value="P:lateral ventricle development"/>
    <property type="evidence" value="ECO:0007669"/>
    <property type="project" value="Ensembl"/>
</dbReference>
<dbReference type="GO" id="GO:0000281">
    <property type="term" value="P:mitotic cytokinesis"/>
    <property type="evidence" value="ECO:0000314"/>
    <property type="project" value="MGI"/>
</dbReference>
<dbReference type="GO" id="GO:0050885">
    <property type="term" value="P:neuromuscular process controlling balance"/>
    <property type="evidence" value="ECO:0007669"/>
    <property type="project" value="Ensembl"/>
</dbReference>
<dbReference type="GO" id="GO:0001764">
    <property type="term" value="P:neuron migration"/>
    <property type="evidence" value="ECO:0007669"/>
    <property type="project" value="Ensembl"/>
</dbReference>
<dbReference type="GO" id="GO:0007097">
    <property type="term" value="P:nuclear migration"/>
    <property type="evidence" value="ECO:0007669"/>
    <property type="project" value="Ensembl"/>
</dbReference>
<dbReference type="GO" id="GO:0001778">
    <property type="term" value="P:plasma membrane repair"/>
    <property type="evidence" value="ECO:0007669"/>
    <property type="project" value="Ensembl"/>
</dbReference>
<dbReference type="GO" id="GO:0050714">
    <property type="term" value="P:positive regulation of protein secretion"/>
    <property type="evidence" value="ECO:0000315"/>
    <property type="project" value="UniProtKB"/>
</dbReference>
<dbReference type="GO" id="GO:0098974">
    <property type="term" value="P:postsynaptic actin cytoskeleton organization"/>
    <property type="evidence" value="ECO:0007669"/>
    <property type="project" value="Ensembl"/>
</dbReference>
<dbReference type="GO" id="GO:0008360">
    <property type="term" value="P:regulation of cell shape"/>
    <property type="evidence" value="ECO:0000318"/>
    <property type="project" value="GO_Central"/>
</dbReference>
<dbReference type="GO" id="GO:0060041">
    <property type="term" value="P:retina development in camera-type eye"/>
    <property type="evidence" value="ECO:0007669"/>
    <property type="project" value="Ensembl"/>
</dbReference>
<dbReference type="GO" id="GO:0006930">
    <property type="term" value="P:substrate-dependent cell migration, cell extension"/>
    <property type="evidence" value="ECO:0007669"/>
    <property type="project" value="Ensembl"/>
</dbReference>
<dbReference type="GO" id="GO:0046718">
    <property type="term" value="P:symbiont entry into host cell"/>
    <property type="evidence" value="ECO:0000314"/>
    <property type="project" value="UniProt"/>
</dbReference>
<dbReference type="GO" id="GO:0021678">
    <property type="term" value="P:third ventricle development"/>
    <property type="evidence" value="ECO:0007669"/>
    <property type="project" value="Ensembl"/>
</dbReference>
<dbReference type="GO" id="GO:0055015">
    <property type="term" value="P:ventricular cardiac muscle cell development"/>
    <property type="evidence" value="ECO:0007669"/>
    <property type="project" value="Ensembl"/>
</dbReference>
<dbReference type="CDD" id="cd14920">
    <property type="entry name" value="MYSc_Myh10"/>
    <property type="match status" value="1"/>
</dbReference>
<dbReference type="FunFam" id="2.30.30.360:FF:000001">
    <property type="entry name" value="Myosin heavy chain"/>
    <property type="match status" value="1"/>
</dbReference>
<dbReference type="FunFam" id="3.30.70.1590:FF:000001">
    <property type="entry name" value="Myosin heavy chain"/>
    <property type="match status" value="1"/>
</dbReference>
<dbReference type="FunFam" id="1.10.10.820:FF:000002">
    <property type="entry name" value="Myosin heavy chain 10"/>
    <property type="match status" value="1"/>
</dbReference>
<dbReference type="FunFam" id="1.20.120.720:FF:000002">
    <property type="entry name" value="Myosin heavy chain 10"/>
    <property type="match status" value="1"/>
</dbReference>
<dbReference type="FunFam" id="1.20.5.4820:FF:000002">
    <property type="entry name" value="Myosin heavy chain 10"/>
    <property type="match status" value="1"/>
</dbReference>
<dbReference type="FunFam" id="1.20.58.530:FF:000003">
    <property type="entry name" value="Myosin heavy chain 10"/>
    <property type="match status" value="1"/>
</dbReference>
<dbReference type="FunFam" id="1.20.5.340:FF:000008">
    <property type="entry name" value="Myosin heavy chain 11"/>
    <property type="match status" value="1"/>
</dbReference>
<dbReference type="FunFam" id="1.20.5.340:FF:000007">
    <property type="entry name" value="Myosin heavy chain, non-muscle"/>
    <property type="match status" value="1"/>
</dbReference>
<dbReference type="FunFam" id="4.10.270.10:FF:000001">
    <property type="entry name" value="Myosin heavy chain, non-muscle"/>
    <property type="match status" value="1"/>
</dbReference>
<dbReference type="FunFam" id="1.20.5.340:FF:000017">
    <property type="entry name" value="myosin-10 isoform X2"/>
    <property type="match status" value="1"/>
</dbReference>
<dbReference type="FunFam" id="1.20.5.340:FF:000009">
    <property type="entry name" value="myosin-11 isoform X2"/>
    <property type="match status" value="1"/>
</dbReference>
<dbReference type="FunFam" id="3.40.850.10:FF:000101">
    <property type="entry name" value="Slow myosin heavy chain 2"/>
    <property type="match status" value="1"/>
</dbReference>
<dbReference type="Gene3D" id="1.10.10.820">
    <property type="match status" value="1"/>
</dbReference>
<dbReference type="Gene3D" id="1.10.287.1490">
    <property type="match status" value="1"/>
</dbReference>
<dbReference type="Gene3D" id="1.20.5.340">
    <property type="match status" value="4"/>
</dbReference>
<dbReference type="Gene3D" id="1.20.5.4820">
    <property type="match status" value="1"/>
</dbReference>
<dbReference type="Gene3D" id="1.20.58.530">
    <property type="match status" value="1"/>
</dbReference>
<dbReference type="Gene3D" id="6.10.250.2420">
    <property type="match status" value="1"/>
</dbReference>
<dbReference type="Gene3D" id="3.40.850.10">
    <property type="entry name" value="Kinesin motor domain"/>
    <property type="match status" value="1"/>
</dbReference>
<dbReference type="Gene3D" id="2.30.30.360">
    <property type="entry name" value="Myosin S1 fragment, N-terminal"/>
    <property type="match status" value="1"/>
</dbReference>
<dbReference type="Gene3D" id="1.20.120.720">
    <property type="entry name" value="Myosin VI head, motor domain, U50 subdomain"/>
    <property type="match status" value="1"/>
</dbReference>
<dbReference type="InterPro" id="IPR000048">
    <property type="entry name" value="IQ_motif_EF-hand-BS"/>
</dbReference>
<dbReference type="InterPro" id="IPR036961">
    <property type="entry name" value="Kinesin_motor_dom_sf"/>
</dbReference>
<dbReference type="InterPro" id="IPR001609">
    <property type="entry name" value="Myosin_head_motor_dom-like"/>
</dbReference>
<dbReference type="InterPro" id="IPR004009">
    <property type="entry name" value="Myosin_N"/>
</dbReference>
<dbReference type="InterPro" id="IPR008989">
    <property type="entry name" value="Myosin_S1_N"/>
</dbReference>
<dbReference type="InterPro" id="IPR002928">
    <property type="entry name" value="Myosin_tail"/>
</dbReference>
<dbReference type="InterPro" id="IPR027417">
    <property type="entry name" value="P-loop_NTPase"/>
</dbReference>
<dbReference type="PANTHER" id="PTHR45615">
    <property type="entry name" value="MYOSIN HEAVY CHAIN, NON-MUSCLE"/>
    <property type="match status" value="1"/>
</dbReference>
<dbReference type="PANTHER" id="PTHR45615:SF40">
    <property type="entry name" value="MYOSIN HEAVY CHAIN, NON-MUSCLE"/>
    <property type="match status" value="1"/>
</dbReference>
<dbReference type="Pfam" id="PF00612">
    <property type="entry name" value="IQ"/>
    <property type="match status" value="1"/>
</dbReference>
<dbReference type="Pfam" id="PF00063">
    <property type="entry name" value="Myosin_head"/>
    <property type="match status" value="1"/>
</dbReference>
<dbReference type="Pfam" id="PF02736">
    <property type="entry name" value="Myosin_N"/>
    <property type="match status" value="1"/>
</dbReference>
<dbReference type="Pfam" id="PF01576">
    <property type="entry name" value="Myosin_tail_1"/>
    <property type="match status" value="1"/>
</dbReference>
<dbReference type="PRINTS" id="PR00193">
    <property type="entry name" value="MYOSINHEAVY"/>
</dbReference>
<dbReference type="SMART" id="SM00015">
    <property type="entry name" value="IQ"/>
    <property type="match status" value="1"/>
</dbReference>
<dbReference type="SMART" id="SM00242">
    <property type="entry name" value="MYSc"/>
    <property type="match status" value="1"/>
</dbReference>
<dbReference type="SUPFAM" id="SSF90257">
    <property type="entry name" value="Myosin rod fragments"/>
    <property type="match status" value="6"/>
</dbReference>
<dbReference type="SUPFAM" id="SSF50084">
    <property type="entry name" value="Myosin S1 fragment, N-terminal domain"/>
    <property type="match status" value="1"/>
</dbReference>
<dbReference type="SUPFAM" id="SSF52540">
    <property type="entry name" value="P-loop containing nucleoside triphosphate hydrolases"/>
    <property type="match status" value="1"/>
</dbReference>
<dbReference type="PROSITE" id="PS50096">
    <property type="entry name" value="IQ"/>
    <property type="match status" value="1"/>
</dbReference>
<dbReference type="PROSITE" id="PS51456">
    <property type="entry name" value="MYOSIN_MOTOR"/>
    <property type="match status" value="1"/>
</dbReference>
<dbReference type="PROSITE" id="PS51844">
    <property type="entry name" value="SH3_LIKE"/>
    <property type="match status" value="1"/>
</dbReference>